<accession>Q5U2Z3</accession>
<comment type="function">
    <text evidence="3">Acts as a histone chaperone in nucleosome assembly.</text>
</comment>
<comment type="subunit">
    <text evidence="3">Interacts with core (H2A, H2B, H3, H4) and linker (H1) histones.</text>
</comment>
<comment type="subcellular location">
    <subcellularLocation>
        <location evidence="3">Nucleus</location>
    </subcellularLocation>
    <subcellularLocation>
        <location evidence="3">Cytoplasm</location>
    </subcellularLocation>
    <text evidence="3">Present in the cytoplasm and excluded from the nucleus during G0/G1 phase, then relocates to the nucleus by the time cells are in S phase. Phosphorylated form localizes in the cytoplasm during the G0/G1 transition, whereas dephosphorylation leads to relocalization into the nucleus at the G1/S-boundary.</text>
</comment>
<comment type="PTM">
    <text evidence="2">Polyglutamylated and polyglycylated. These 2 modifications occur exclusively on glutamate residues and result in either polyglutamate or polyglycine chains on the gamma-carboxyl group. Both modifications can coexist on the same protein on adjacent residues, and lowering polyglycylation levels increases polyglutamylation, and reciprocally. Polyglutamylated by TTLL4.</text>
</comment>
<comment type="PTM">
    <text evidence="3">Phosphorylated at the G0/G1 boundary but it is not phosphorylated in S-phase. Phosphorylated protein remains in the cytoplasm in a complex with histones during the G0/G1 transition, whereas dephosphorylation triggers its transport into the nucleus at the G1/S-boundary.</text>
</comment>
<comment type="similarity">
    <text evidence="6">Belongs to the nucleosome assembly protein (NAP) family.</text>
</comment>
<reference key="1">
    <citation type="journal article" date="2004" name="Genome Res.">
        <title>The status, quality, and expansion of the NIH full-length cDNA project: the Mammalian Gene Collection (MGC).</title>
        <authorList>
            <consortium name="The MGC Project Team"/>
        </authorList>
    </citation>
    <scope>NUCLEOTIDE SEQUENCE [LARGE SCALE MRNA]</scope>
    <source>
        <tissue>Kidney</tissue>
    </source>
</reference>
<reference key="2">
    <citation type="journal article" date="2006" name="Proc. Natl. Acad. Sci. U.S.A.">
        <title>Quantitative phosphoproteomics of vasopressin-sensitive renal cells: regulation of aquaporin-2 phosphorylation at two sites.</title>
        <authorList>
            <person name="Hoffert J.D."/>
            <person name="Pisitkun T."/>
            <person name="Wang G."/>
            <person name="Shen R.-F."/>
            <person name="Knepper M.A."/>
        </authorList>
    </citation>
    <scope>PHOSPHORYLATION [LARGE SCALE ANALYSIS] AT SER-125</scope>
    <scope>IDENTIFICATION BY MASS SPECTROMETRY [LARGE SCALE ANALYSIS]</scope>
</reference>
<reference key="3">
    <citation type="journal article" date="2012" name="Nat. Commun.">
        <title>Quantitative maps of protein phosphorylation sites across 14 different rat organs and tissues.</title>
        <authorList>
            <person name="Lundby A."/>
            <person name="Secher A."/>
            <person name="Lage K."/>
            <person name="Nordsborg N.B."/>
            <person name="Dmytriyev A."/>
            <person name="Lundby C."/>
            <person name="Olsen J.V."/>
        </authorList>
    </citation>
    <scope>PHOSPHORYLATION [LARGE SCALE ANALYSIS] AT SER-7; THR-51; SER-53 AND SER-125</scope>
    <scope>IDENTIFICATION BY MASS SPECTROMETRY [LARGE SCALE ANALYSIS]</scope>
</reference>
<feature type="initiator methionine" description="Removed" evidence="3">
    <location>
        <position position="1"/>
    </location>
</feature>
<feature type="chain" id="PRO_0000236214" description="Nucleosome assembly protein 1-like 4">
    <location>
        <begin position="2"/>
        <end position="386"/>
    </location>
</feature>
<feature type="region of interest" description="Disordered" evidence="5">
    <location>
        <begin position="1"/>
        <end position="28"/>
    </location>
</feature>
<feature type="region of interest" description="Disordered" evidence="5">
    <location>
        <begin position="339"/>
        <end position="386"/>
    </location>
</feature>
<feature type="short sequence motif" description="Nuclear localization signal" evidence="4">
    <location>
        <begin position="265"/>
        <end position="271"/>
    </location>
</feature>
<feature type="compositionally biased region" description="Acidic residues" evidence="5">
    <location>
        <begin position="339"/>
        <end position="370"/>
    </location>
</feature>
<feature type="modified residue" description="N-acetylalanine" evidence="3">
    <location>
        <position position="2"/>
    </location>
</feature>
<feature type="modified residue" description="Phosphoserine" evidence="3">
    <location>
        <position position="5"/>
    </location>
</feature>
<feature type="modified residue" description="Phosphoserine" evidence="8">
    <location>
        <position position="7"/>
    </location>
</feature>
<feature type="modified residue" description="Phosphoserine" evidence="2">
    <location>
        <position position="49"/>
    </location>
</feature>
<feature type="modified residue" description="Phosphothreonine" evidence="8">
    <location>
        <position position="51"/>
    </location>
</feature>
<feature type="modified residue" description="Phosphoserine" evidence="8">
    <location>
        <position position="53"/>
    </location>
</feature>
<feature type="modified residue" description="Phosphoserine" evidence="3">
    <location>
        <position position="54"/>
    </location>
</feature>
<feature type="modified residue" description="Phosphothreonine" evidence="3">
    <location>
        <position position="58"/>
    </location>
</feature>
<feature type="modified residue" description="N6-acetyllysine" evidence="1">
    <location>
        <position position="105"/>
    </location>
</feature>
<feature type="modified residue" description="Phosphoserine" evidence="7 8">
    <location>
        <position position="125"/>
    </location>
</feature>
<feature type="modified residue" description="N6-acetyllysine" evidence="2">
    <location>
        <position position="146"/>
    </location>
</feature>
<feature type="modified residue" description="Phosphoserine" evidence="3">
    <location>
        <position position="304"/>
    </location>
</feature>
<dbReference type="EMBL" id="BC085801">
    <property type="protein sequence ID" value="AAH85801.1"/>
    <property type="molecule type" value="mRNA"/>
</dbReference>
<dbReference type="RefSeq" id="NP_001012170.1">
    <property type="nucleotide sequence ID" value="NM_001012170.1"/>
</dbReference>
<dbReference type="RefSeq" id="XP_006230885.1">
    <property type="nucleotide sequence ID" value="XM_006230823.5"/>
</dbReference>
<dbReference type="RefSeq" id="XP_006230886.1">
    <property type="nucleotide sequence ID" value="XM_006230824.5"/>
</dbReference>
<dbReference type="RefSeq" id="XP_063124116.1">
    <property type="nucleotide sequence ID" value="XM_063268046.1"/>
</dbReference>
<dbReference type="RefSeq" id="XP_063124118.1">
    <property type="nucleotide sequence ID" value="XM_063268048.1"/>
</dbReference>
<dbReference type="RefSeq" id="XP_063124123.1">
    <property type="nucleotide sequence ID" value="XM_063268053.1"/>
</dbReference>
<dbReference type="RefSeq" id="XP_063124131.1">
    <property type="nucleotide sequence ID" value="XM_063268061.1"/>
</dbReference>
<dbReference type="RefSeq" id="XP_063124136.1">
    <property type="nucleotide sequence ID" value="XM_063268066.1"/>
</dbReference>
<dbReference type="RefSeq" id="XP_063124142.1">
    <property type="nucleotide sequence ID" value="XM_063268072.1"/>
</dbReference>
<dbReference type="SMR" id="Q5U2Z3"/>
<dbReference type="BioGRID" id="262874">
    <property type="interactions" value="2"/>
</dbReference>
<dbReference type="FunCoup" id="Q5U2Z3">
    <property type="interactions" value="3415"/>
</dbReference>
<dbReference type="IntAct" id="Q5U2Z3">
    <property type="interactions" value="2"/>
</dbReference>
<dbReference type="STRING" id="10116.ENSRNOP00000051745"/>
<dbReference type="GlyGen" id="Q5U2Z3">
    <property type="glycosylation" value="1 site"/>
</dbReference>
<dbReference type="iPTMnet" id="Q5U2Z3"/>
<dbReference type="PhosphoSitePlus" id="Q5U2Z3"/>
<dbReference type="SwissPalm" id="Q5U2Z3"/>
<dbReference type="jPOST" id="Q5U2Z3"/>
<dbReference type="PaxDb" id="10116-ENSRNOP00000051745"/>
<dbReference type="GeneID" id="361684"/>
<dbReference type="KEGG" id="rno:361684"/>
<dbReference type="UCSC" id="RGD:1305391">
    <property type="organism name" value="rat"/>
</dbReference>
<dbReference type="AGR" id="RGD:1305391"/>
<dbReference type="CTD" id="4676"/>
<dbReference type="RGD" id="1305391">
    <property type="gene designation" value="Nap1l4"/>
</dbReference>
<dbReference type="VEuPathDB" id="HostDB:ENSRNOG00000020615"/>
<dbReference type="eggNOG" id="KOG1507">
    <property type="taxonomic scope" value="Eukaryota"/>
</dbReference>
<dbReference type="InParanoid" id="Q5U2Z3"/>
<dbReference type="OrthoDB" id="72331at9989"/>
<dbReference type="PRO" id="PR:Q5U2Z3"/>
<dbReference type="Proteomes" id="UP000002494">
    <property type="component" value="Chromosome 1"/>
</dbReference>
<dbReference type="Bgee" id="ENSRNOG00000020615">
    <property type="expression patterns" value="Expressed in skeletal muscle tissue and 20 other cell types or tissues"/>
</dbReference>
<dbReference type="ExpressionAtlas" id="Q5U2Z3">
    <property type="expression patterns" value="baseline and differential"/>
</dbReference>
<dbReference type="GO" id="GO:0000785">
    <property type="term" value="C:chromatin"/>
    <property type="evidence" value="ECO:0000318"/>
    <property type="project" value="GO_Central"/>
</dbReference>
<dbReference type="GO" id="GO:0005737">
    <property type="term" value="C:cytoplasm"/>
    <property type="evidence" value="ECO:0000250"/>
    <property type="project" value="UniProtKB"/>
</dbReference>
<dbReference type="GO" id="GO:0030425">
    <property type="term" value="C:dendrite"/>
    <property type="evidence" value="ECO:0000314"/>
    <property type="project" value="RGD"/>
</dbReference>
<dbReference type="GO" id="GO:0043025">
    <property type="term" value="C:neuronal cell body"/>
    <property type="evidence" value="ECO:0000314"/>
    <property type="project" value="RGD"/>
</dbReference>
<dbReference type="GO" id="GO:0005634">
    <property type="term" value="C:nucleus"/>
    <property type="evidence" value="ECO:0000250"/>
    <property type="project" value="UniProtKB"/>
</dbReference>
<dbReference type="GO" id="GO:0003682">
    <property type="term" value="F:chromatin binding"/>
    <property type="evidence" value="ECO:0000318"/>
    <property type="project" value="GO_Central"/>
</dbReference>
<dbReference type="GO" id="GO:0042393">
    <property type="term" value="F:histone binding"/>
    <property type="evidence" value="ECO:0000318"/>
    <property type="project" value="GO_Central"/>
</dbReference>
<dbReference type="GO" id="GO:0031491">
    <property type="term" value="F:nucleosome binding"/>
    <property type="evidence" value="ECO:0000250"/>
    <property type="project" value="UniProtKB"/>
</dbReference>
<dbReference type="GO" id="GO:0006334">
    <property type="term" value="P:nucleosome assembly"/>
    <property type="evidence" value="ECO:0000250"/>
    <property type="project" value="UniProtKB"/>
</dbReference>
<dbReference type="FunFam" id="1.20.5.1500:FF:000001">
    <property type="entry name" value="Nucleosome assembly protein 1-like 1"/>
    <property type="match status" value="1"/>
</dbReference>
<dbReference type="FunFam" id="3.30.1120.90:FF:000001">
    <property type="entry name" value="Nucleosome assembly protein 1-like 1"/>
    <property type="match status" value="1"/>
</dbReference>
<dbReference type="Gene3D" id="1.20.5.1500">
    <property type="match status" value="1"/>
</dbReference>
<dbReference type="Gene3D" id="3.30.1120.90">
    <property type="entry name" value="Nucleosome assembly protein"/>
    <property type="match status" value="1"/>
</dbReference>
<dbReference type="InterPro" id="IPR037231">
    <property type="entry name" value="NAP-like_sf"/>
</dbReference>
<dbReference type="InterPro" id="IPR002164">
    <property type="entry name" value="NAP_family"/>
</dbReference>
<dbReference type="PANTHER" id="PTHR11875">
    <property type="entry name" value="TESTIS-SPECIFIC Y-ENCODED PROTEIN"/>
    <property type="match status" value="1"/>
</dbReference>
<dbReference type="Pfam" id="PF00956">
    <property type="entry name" value="NAP"/>
    <property type="match status" value="1"/>
</dbReference>
<dbReference type="SUPFAM" id="SSF143113">
    <property type="entry name" value="NAP-like"/>
    <property type="match status" value="1"/>
</dbReference>
<protein>
    <recommendedName>
        <fullName>Nucleosome assembly protein 1-like 4</fullName>
    </recommendedName>
</protein>
<organism>
    <name type="scientific">Rattus norvegicus</name>
    <name type="common">Rat</name>
    <dbReference type="NCBI Taxonomy" id="10116"/>
    <lineage>
        <taxon>Eukaryota</taxon>
        <taxon>Metazoa</taxon>
        <taxon>Chordata</taxon>
        <taxon>Craniata</taxon>
        <taxon>Vertebrata</taxon>
        <taxon>Euteleostomi</taxon>
        <taxon>Mammalia</taxon>
        <taxon>Eutheria</taxon>
        <taxon>Euarchontoglires</taxon>
        <taxon>Glires</taxon>
        <taxon>Rodentia</taxon>
        <taxon>Myomorpha</taxon>
        <taxon>Muroidea</taxon>
        <taxon>Muridae</taxon>
        <taxon>Murinae</taxon>
        <taxon>Rattus</taxon>
    </lineage>
</organism>
<keyword id="KW-0007">Acetylation</keyword>
<keyword id="KW-0143">Chaperone</keyword>
<keyword id="KW-0963">Cytoplasm</keyword>
<keyword id="KW-0539">Nucleus</keyword>
<keyword id="KW-0597">Phosphoprotein</keyword>
<keyword id="KW-1185">Reference proteome</keyword>
<proteinExistence type="evidence at protein level"/>
<sequence length="386" mass="43917">MAENSLSDGGPADSVEAAKNASNTEKLTDQVMQNPQVLAALQERLDNVSHTPSSYIETLPKAVKRRINALKQLQVRCAHIEAKFYEEVHDLERKYAALYQPLFDKRREFITGDVEPTDAESAWHSENEEDDKLAGDMKNKVVIAEKEAAAVEELNPKGIPEFWFTIFRNVDMLSELVQEYDEPILKHLQDIKVKFSDPGQPMSFVLEFHFEPNDYFTNPVLTKTYKMKSEPDKADPFSFEGPEIVDCDGCTIDWKKGKNVTVKTIKKKQKHKGRGTVRTITKQVPNESFFNFFSPLKASGDGESLDEDSEFTLASDFEIGHFFRERIVPRAVLYFTGEAIEDDDNFEEGEEGEEEELEGDEEGEDEDDADVNPKKEPIQPAECKQQ</sequence>
<evidence type="ECO:0000250" key="1">
    <source>
        <dbReference type="UniProtKB" id="P28656"/>
    </source>
</evidence>
<evidence type="ECO:0000250" key="2">
    <source>
        <dbReference type="UniProtKB" id="Q78ZA7"/>
    </source>
</evidence>
<evidence type="ECO:0000250" key="3">
    <source>
        <dbReference type="UniProtKB" id="Q99733"/>
    </source>
</evidence>
<evidence type="ECO:0000255" key="4"/>
<evidence type="ECO:0000256" key="5">
    <source>
        <dbReference type="SAM" id="MobiDB-lite"/>
    </source>
</evidence>
<evidence type="ECO:0000305" key="6"/>
<evidence type="ECO:0007744" key="7">
    <source>
    </source>
</evidence>
<evidence type="ECO:0007744" key="8">
    <source>
    </source>
</evidence>
<gene>
    <name type="primary">Nap1l4</name>
</gene>
<name>NP1L4_RAT</name>